<keyword id="KW-0614">Plasmid</keyword>
<proteinExistence type="predicted"/>
<dbReference type="EMBL" id="AB027308">
    <property type="protein sequence ID" value="BAA77987.1"/>
    <property type="molecule type" value="Genomic_DNA"/>
</dbReference>
<dbReference type="EMBL" id="D90039">
    <property type="protein sequence ID" value="BAA14091.1"/>
    <property type="molecule type" value="Genomic_DNA"/>
</dbReference>
<dbReference type="PIR" id="D26421">
    <property type="entry name" value="D26421"/>
</dbReference>
<dbReference type="RefSeq" id="WP_024132209.1">
    <property type="nucleotide sequence ID" value="NZ_VKIF01000150.1"/>
</dbReference>
<dbReference type="InterPro" id="IPR029017">
    <property type="entry name" value="Enolase-like_N"/>
</dbReference>
<dbReference type="InterPro" id="IPR007001">
    <property type="entry name" value="Shufflon_N"/>
</dbReference>
<dbReference type="Pfam" id="PF04917">
    <property type="entry name" value="Shufflon_N"/>
    <property type="match status" value="1"/>
</dbReference>
<dbReference type="SUPFAM" id="SSF54826">
    <property type="entry name" value="Enolase N-terminal domain-like"/>
    <property type="match status" value="1"/>
</dbReference>
<feature type="chain" id="PRO_0000097745" description="Shufflon protein B'">
    <location>
        <begin position="1"/>
        <end position="444"/>
    </location>
</feature>
<feature type="region of interest" description="Constant region">
    <location>
        <begin position="1"/>
        <end position="361"/>
    </location>
</feature>
<feature type="region of interest" description="Variable region">
    <location>
        <begin position="362"/>
        <end position="444"/>
    </location>
</feature>
<name>SHU4_ECOLX</name>
<accession>P09748</accession>
<protein>
    <recommendedName>
        <fullName>Shufflon protein B'</fullName>
    </recommendedName>
</protein>
<reference key="1">
    <citation type="journal article" date="1987" name="Nucleic Acids Res.">
        <title>Shufflon: multi-inversion of four contiguous DNA segments of plasmid R64 creates seven different open reading frames.</title>
        <authorList>
            <person name="Komano T."/>
            <person name="Kubo A."/>
            <person name="Nisioka T."/>
        </authorList>
    </citation>
    <scope>NUCLEOTIDE SEQUENCE [GENOMIC DNA]</scope>
    <source>
        <plasmid>IncI1 R64</plasmid>
    </source>
</reference>
<reference key="2">
    <citation type="journal article" date="1989" name="Plasmid">
        <title>Cloning and nucleotide sequence of the ColIb shufflon.</title>
        <authorList>
            <person name="Kim S.-R."/>
            <person name="Komano T."/>
        </authorList>
    </citation>
    <scope>NUCLEOTIDE SEQUENCE [GENOMIC DNA] OF 362-444</scope>
    <source>
        <plasmid>IncI1 ColIb-P9</plasmid>
    </source>
</reference>
<geneLocation type="plasmid">
    <name>IncI1 R64</name>
</geneLocation>
<geneLocation type="plasmid">
    <name>IncI1 ColIb-P9</name>
</geneLocation>
<organism>
    <name type="scientific">Escherichia coli</name>
    <dbReference type="NCBI Taxonomy" id="562"/>
    <lineage>
        <taxon>Bacteria</taxon>
        <taxon>Pseudomonadati</taxon>
        <taxon>Pseudomonadota</taxon>
        <taxon>Gammaproteobacteria</taxon>
        <taxon>Enterobacterales</taxon>
        <taxon>Enterobacteriaceae</taxon>
        <taxon>Escherichia</taxon>
    </lineage>
</organism>
<sequence length="444" mass="46945">MKKYDRGWASLETGAALLIVMLLIAWGAGIWQDYIQTKGWQTEARLVSNWTSAARSYIGKNYTTLQGSSTTTTPAVITTTMLKNTGFLSSGFTETNSEGQRLQAYVVRNAQNPELLQAMVVSSGGTPYPVKALIQMAKDITTGLGGYIQDGKTATGALRSWSVALSNYGAKSGNGHIAVLLSTDELSGAAEDTDRLYRFQVNGRPDLNKMHTAIDMGSNNLNNVGAVNAQTGNFSGNVNGVNGTFSGQVKGNSGNFDVNVTAGGDIRSNNGWLITRNSKGWLNETHGGGFYMSDGSWVRSVNNKGIYTGGQVKGGTVRADGRLYTGEYLQLERTAVAGASCSPNGLVGRDNTGAILSCQSGTWRKVGSGELQIATAQATGWRFPGATATCPTGKRVTGGGGICTSRTGYIWLTRSFPSANNSWSAACDTTEDQNGSITVYAICQ</sequence>
<comment type="miscellaneous">
    <text>This protein is expressed by a shufflon (= clustered inversion region that works as a biological switch). The orfs of this region share a constant N-terminus, while the C-terminus is variable.</text>
</comment>